<proteinExistence type="inferred from homology"/>
<feature type="chain" id="PRO_0000411052" description="Ribosomal lysine N-methyltransferase 5">
    <location>
        <begin position="1"/>
        <end position="318"/>
    </location>
</feature>
<feature type="binding site" evidence="2">
    <location>
        <position position="95"/>
    </location>
    <ligand>
        <name>S-adenosyl-L-methionine</name>
        <dbReference type="ChEBI" id="CHEBI:59789"/>
    </ligand>
</feature>
<feature type="binding site" evidence="2">
    <location>
        <begin position="139"/>
        <end position="141"/>
    </location>
    <ligand>
        <name>S-adenosyl-L-methionine</name>
        <dbReference type="ChEBI" id="CHEBI:59789"/>
    </ligand>
</feature>
<feature type="binding site" evidence="2">
    <location>
        <position position="161"/>
    </location>
    <ligand>
        <name>S-adenosyl-L-methionine</name>
        <dbReference type="ChEBI" id="CHEBI:59789"/>
    </ligand>
</feature>
<feature type="binding site" evidence="2">
    <location>
        <position position="214"/>
    </location>
    <ligand>
        <name>S-adenosyl-L-methionine</name>
        <dbReference type="ChEBI" id="CHEBI:59789"/>
    </ligand>
</feature>
<feature type="binding site" evidence="2">
    <location>
        <position position="241"/>
    </location>
    <ligand>
        <name>S-adenosyl-L-methionine</name>
        <dbReference type="ChEBI" id="CHEBI:59789"/>
    </ligand>
</feature>
<organism>
    <name type="scientific">Zygosaccharomyces rouxii (strain ATCC 2623 / CBS 732 / NBRC 1130 / NCYC 568 / NRRL Y-229)</name>
    <dbReference type="NCBI Taxonomy" id="559307"/>
    <lineage>
        <taxon>Eukaryota</taxon>
        <taxon>Fungi</taxon>
        <taxon>Dikarya</taxon>
        <taxon>Ascomycota</taxon>
        <taxon>Saccharomycotina</taxon>
        <taxon>Saccharomycetes</taxon>
        <taxon>Saccharomycetales</taxon>
        <taxon>Saccharomycetaceae</taxon>
        <taxon>Zygosaccharomyces</taxon>
    </lineage>
</organism>
<sequence>MVFHLKPFDVDNIHEHIFDRYTLLESLADGLSQDLGIHQRDEIVQVDIEPPITTKVKGKRKASKGLQPYNFTIRQSIAGLNSSSNANSTTGYVLWSTTPTFARWLLYDGNALPLREEDTDTSIPAIFSGSKSTAVVELGSGISGILPIVLGDQVDHYVCTDQKGILSKLKYNIEENLLQFNRRRCISEFLQIEPPSNEDQQRRNTRLEIMELDWEKFNGPTAQTHLTRISEECSTVHIVAMDVIYNDFLIDPFLKTLNHLRNYYLNEGLITHCIVGIHLRAQDVVEAFLERAILEYNLPICSVEDPFLEKTRVSLYYI</sequence>
<keyword id="KW-0489">Methyltransferase</keyword>
<keyword id="KW-1185">Reference proteome</keyword>
<keyword id="KW-0949">S-adenosyl-L-methionine</keyword>
<keyword id="KW-0808">Transferase</keyword>
<protein>
    <recommendedName>
        <fullName evidence="1">Ribosomal lysine N-methyltransferase 5</fullName>
        <ecNumber evidence="1">2.1.1.-</ecNumber>
    </recommendedName>
</protein>
<dbReference type="EC" id="2.1.1.-" evidence="1"/>
<dbReference type="EMBL" id="CU928178">
    <property type="protein sequence ID" value="CAR28866.1"/>
    <property type="molecule type" value="Genomic_DNA"/>
</dbReference>
<dbReference type="RefSeq" id="XP_002497799.1">
    <property type="nucleotide sequence ID" value="XM_002497754.1"/>
</dbReference>
<dbReference type="SMR" id="C5DYK5"/>
<dbReference type="FunCoup" id="C5DYK5">
    <property type="interactions" value="21"/>
</dbReference>
<dbReference type="STRING" id="559307.C5DYK5"/>
<dbReference type="GeneID" id="8205568"/>
<dbReference type="KEGG" id="zro:ZYRO0F13772g"/>
<dbReference type="HOGENOM" id="CLU_051532_0_0_1"/>
<dbReference type="InParanoid" id="C5DYK5"/>
<dbReference type="Proteomes" id="UP000008536">
    <property type="component" value="Chromosome F"/>
</dbReference>
<dbReference type="GO" id="GO:0005829">
    <property type="term" value="C:cytosol"/>
    <property type="evidence" value="ECO:0007669"/>
    <property type="project" value="TreeGrafter"/>
</dbReference>
<dbReference type="GO" id="GO:0032991">
    <property type="term" value="C:protein-containing complex"/>
    <property type="evidence" value="ECO:0007669"/>
    <property type="project" value="TreeGrafter"/>
</dbReference>
<dbReference type="GO" id="GO:0008757">
    <property type="term" value="F:S-adenosylmethionine-dependent methyltransferase activity"/>
    <property type="evidence" value="ECO:0007669"/>
    <property type="project" value="UniProtKB-ARBA"/>
</dbReference>
<dbReference type="GO" id="GO:0032259">
    <property type="term" value="P:methylation"/>
    <property type="evidence" value="ECO:0007669"/>
    <property type="project" value="UniProtKB-KW"/>
</dbReference>
<dbReference type="Gene3D" id="3.40.50.150">
    <property type="entry name" value="Vaccinia Virus protein VP39"/>
    <property type="match status" value="1"/>
</dbReference>
<dbReference type="InterPro" id="IPR019410">
    <property type="entry name" value="Methyltransf_16"/>
</dbReference>
<dbReference type="InterPro" id="IPR029063">
    <property type="entry name" value="SAM-dependent_MTases_sf"/>
</dbReference>
<dbReference type="PANTHER" id="PTHR14614">
    <property type="entry name" value="HEPATOCELLULAR CARCINOMA-ASSOCIATED ANTIGEN"/>
    <property type="match status" value="1"/>
</dbReference>
<dbReference type="PANTHER" id="PTHR14614:SF109">
    <property type="entry name" value="RIBOSOMAL LYSINE N-METHYLTRANSFERASE 5"/>
    <property type="match status" value="1"/>
</dbReference>
<comment type="function">
    <text evidence="1">S-adenosyl-L-methionine-dependent protein-lysine N-methyltransferase that methylates 60S ribosomal protein L1.</text>
</comment>
<comment type="similarity">
    <text evidence="3">Belongs to the class I-like SAM-binding methyltransferase superfamily. RKM5 family.</text>
</comment>
<reference key="1">
    <citation type="journal article" date="2009" name="Genome Res.">
        <title>Comparative genomics of protoploid Saccharomycetaceae.</title>
        <authorList>
            <consortium name="The Genolevures Consortium"/>
            <person name="Souciet J.-L."/>
            <person name="Dujon B."/>
            <person name="Gaillardin C."/>
            <person name="Johnston M."/>
            <person name="Baret P.V."/>
            <person name="Cliften P."/>
            <person name="Sherman D.J."/>
            <person name="Weissenbach J."/>
            <person name="Westhof E."/>
            <person name="Wincker P."/>
            <person name="Jubin C."/>
            <person name="Poulain J."/>
            <person name="Barbe V."/>
            <person name="Segurens B."/>
            <person name="Artiguenave F."/>
            <person name="Anthouard V."/>
            <person name="Vacherie B."/>
            <person name="Val M.-E."/>
            <person name="Fulton R.S."/>
            <person name="Minx P."/>
            <person name="Wilson R."/>
            <person name="Durrens P."/>
            <person name="Jean G."/>
            <person name="Marck C."/>
            <person name="Martin T."/>
            <person name="Nikolski M."/>
            <person name="Rolland T."/>
            <person name="Seret M.-L."/>
            <person name="Casaregola S."/>
            <person name="Despons L."/>
            <person name="Fairhead C."/>
            <person name="Fischer G."/>
            <person name="Lafontaine I."/>
            <person name="Leh V."/>
            <person name="Lemaire M."/>
            <person name="de Montigny J."/>
            <person name="Neuveglise C."/>
            <person name="Thierry A."/>
            <person name="Blanc-Lenfle I."/>
            <person name="Bleykasten C."/>
            <person name="Diffels J."/>
            <person name="Fritsch E."/>
            <person name="Frangeul L."/>
            <person name="Goeffon A."/>
            <person name="Jauniaux N."/>
            <person name="Kachouri-Lafond R."/>
            <person name="Payen C."/>
            <person name="Potier S."/>
            <person name="Pribylova L."/>
            <person name="Ozanne C."/>
            <person name="Richard G.-F."/>
            <person name="Sacerdot C."/>
            <person name="Straub M.-L."/>
            <person name="Talla E."/>
        </authorList>
    </citation>
    <scope>NUCLEOTIDE SEQUENCE [LARGE SCALE GENOMIC DNA]</scope>
    <source>
        <strain>ATCC 2623 / CBS 732 / BCRC 21506 / NBRC 1130 / NCYC 568 / NRRL Y-229</strain>
    </source>
</reference>
<evidence type="ECO:0000250" key="1">
    <source>
        <dbReference type="UniProtKB" id="Q12367"/>
    </source>
</evidence>
<evidence type="ECO:0000250" key="2">
    <source>
        <dbReference type="UniProtKB" id="Q9H867"/>
    </source>
</evidence>
<evidence type="ECO:0000305" key="3"/>
<name>RKM5_ZYGRC</name>
<accession>C5DYK5</accession>
<gene>
    <name type="primary">RKM5</name>
    <name type="ordered locus">ZYRO0F13772g</name>
</gene>